<name>GLME_YERE8</name>
<evidence type="ECO:0000255" key="1">
    <source>
        <dbReference type="HAMAP-Rule" id="MF_01923"/>
    </source>
</evidence>
<reference key="1">
    <citation type="journal article" date="2006" name="PLoS Genet.">
        <title>The complete genome sequence and comparative genome analysis of the high pathogenicity Yersinia enterocolitica strain 8081.</title>
        <authorList>
            <person name="Thomson N.R."/>
            <person name="Howard S."/>
            <person name="Wren B.W."/>
            <person name="Holden M.T.G."/>
            <person name="Crossman L."/>
            <person name="Challis G.L."/>
            <person name="Churcher C."/>
            <person name="Mungall K."/>
            <person name="Brooks K."/>
            <person name="Chillingworth T."/>
            <person name="Feltwell T."/>
            <person name="Abdellah Z."/>
            <person name="Hauser H."/>
            <person name="Jagels K."/>
            <person name="Maddison M."/>
            <person name="Moule S."/>
            <person name="Sanders M."/>
            <person name="Whitehead S."/>
            <person name="Quail M.A."/>
            <person name="Dougan G."/>
            <person name="Parkhill J."/>
            <person name="Prentice M.B."/>
        </authorList>
    </citation>
    <scope>NUCLEOTIDE SEQUENCE [LARGE SCALE GENOMIC DNA]</scope>
    <source>
        <strain>NCTC 13174 / 8081</strain>
    </source>
</reference>
<dbReference type="EC" id="5.4.99.1" evidence="1"/>
<dbReference type="EMBL" id="AM286415">
    <property type="protein sequence ID" value="CAL14060.1"/>
    <property type="molecule type" value="Genomic_DNA"/>
</dbReference>
<dbReference type="RefSeq" id="WP_005174826.1">
    <property type="nucleotide sequence ID" value="NC_008800.1"/>
</dbReference>
<dbReference type="RefSeq" id="YP_001008184.1">
    <property type="nucleotide sequence ID" value="NC_008800.1"/>
</dbReference>
<dbReference type="SMR" id="A1JSN7"/>
<dbReference type="KEGG" id="yen:YE4042"/>
<dbReference type="PATRIC" id="fig|393305.7.peg.4303"/>
<dbReference type="eggNOG" id="COG4865">
    <property type="taxonomic scope" value="Bacteria"/>
</dbReference>
<dbReference type="HOGENOM" id="CLU_029922_0_0_6"/>
<dbReference type="OrthoDB" id="5332339at2"/>
<dbReference type="UniPathway" id="UPA00561">
    <property type="reaction ID" value="UER00617"/>
</dbReference>
<dbReference type="Proteomes" id="UP000000642">
    <property type="component" value="Chromosome"/>
</dbReference>
<dbReference type="GO" id="GO:0031419">
    <property type="term" value="F:cobalamin binding"/>
    <property type="evidence" value="ECO:0007669"/>
    <property type="project" value="UniProtKB-KW"/>
</dbReference>
<dbReference type="GO" id="GO:0050097">
    <property type="term" value="F:methylaspartate mutase activity"/>
    <property type="evidence" value="ECO:0007669"/>
    <property type="project" value="UniProtKB-UniRule"/>
</dbReference>
<dbReference type="GO" id="GO:0019670">
    <property type="term" value="P:anaerobic glutamate catabolic process"/>
    <property type="evidence" value="ECO:0007669"/>
    <property type="project" value="InterPro"/>
</dbReference>
<dbReference type="GO" id="GO:0019553">
    <property type="term" value="P:glutamate catabolic process via L-citramalate"/>
    <property type="evidence" value="ECO:0007669"/>
    <property type="project" value="UniProtKB-UniRule"/>
</dbReference>
<dbReference type="CDD" id="cd00245">
    <property type="entry name" value="Glm_e"/>
    <property type="match status" value="1"/>
</dbReference>
<dbReference type="Gene3D" id="3.90.970.10">
    <property type="match status" value="1"/>
</dbReference>
<dbReference type="Gene3D" id="3.20.20.240">
    <property type="entry name" value="Methylmalonyl-CoA mutase"/>
    <property type="match status" value="1"/>
</dbReference>
<dbReference type="HAMAP" id="MF_01923">
    <property type="entry name" value="Me_Asp_mutase_E"/>
    <property type="match status" value="1"/>
</dbReference>
<dbReference type="InterPro" id="IPR016176">
    <property type="entry name" value="Cbl-dep_enz_cat"/>
</dbReference>
<dbReference type="InterPro" id="IPR006396">
    <property type="entry name" value="Glu_mut_E"/>
</dbReference>
<dbReference type="InterPro" id="IPR014714">
    <property type="entry name" value="Glu_mut_E_C_dom_sf"/>
</dbReference>
<dbReference type="NCBIfam" id="TIGR01503">
    <property type="entry name" value="MthylAspMut_E"/>
    <property type="match status" value="1"/>
</dbReference>
<dbReference type="Pfam" id="PF06368">
    <property type="entry name" value="Met_asp_mut_E"/>
    <property type="match status" value="1"/>
</dbReference>
<dbReference type="PIRSF" id="PIRSF001495">
    <property type="entry name" value="Met_asp_mut_epsi"/>
    <property type="match status" value="1"/>
</dbReference>
<dbReference type="SUPFAM" id="SSF51703">
    <property type="entry name" value="Cobalamin (vitamin B12)-dependent enzymes"/>
    <property type="match status" value="1"/>
</dbReference>
<proteinExistence type="inferred from homology"/>
<protein>
    <recommendedName>
        <fullName evidence="1">Glutamate mutase epsilon subunit</fullName>
        <ecNumber evidence="1">5.4.99.1</ecNumber>
    </recommendedName>
    <alternativeName>
        <fullName evidence="1">Glutamate mutase E chain</fullName>
    </alternativeName>
    <alternativeName>
        <fullName evidence="1">Glutamate mutase large subunit</fullName>
    </alternativeName>
    <alternativeName>
        <fullName evidence="1">Methylaspartate mutase</fullName>
    </alternativeName>
</protein>
<organism>
    <name type="scientific">Yersinia enterocolitica serotype O:8 / biotype 1B (strain NCTC 13174 / 8081)</name>
    <dbReference type="NCBI Taxonomy" id="393305"/>
    <lineage>
        <taxon>Bacteria</taxon>
        <taxon>Pseudomonadati</taxon>
        <taxon>Pseudomonadota</taxon>
        <taxon>Gammaproteobacteria</taxon>
        <taxon>Enterobacterales</taxon>
        <taxon>Yersiniaceae</taxon>
        <taxon>Yersinia</taxon>
    </lineage>
</organism>
<gene>
    <name evidence="1" type="primary">glmE</name>
    <name type="synonym">mutE</name>
    <name type="ordered locus">YE4042</name>
</gene>
<feature type="chain" id="PRO_0000429447" description="Glutamate mutase epsilon subunit">
    <location>
        <begin position="1"/>
        <end position="481"/>
    </location>
</feature>
<feature type="binding site" evidence="1">
    <location>
        <position position="67"/>
    </location>
    <ligand>
        <name>L-glutamate</name>
        <dbReference type="ChEBI" id="CHEBI:29985"/>
    </ligand>
</feature>
<feature type="binding site" evidence="1">
    <location>
        <position position="69"/>
    </location>
    <ligand>
        <name>adenosylcob(III)alamin</name>
        <dbReference type="ChEBI" id="CHEBI:18408"/>
    </ligand>
</feature>
<feature type="binding site" evidence="1">
    <location>
        <position position="99"/>
    </location>
    <ligand>
        <name>L-glutamate</name>
        <dbReference type="ChEBI" id="CHEBI:29985"/>
    </ligand>
</feature>
<feature type="binding site" evidence="1">
    <location>
        <position position="122"/>
    </location>
    <ligand>
        <name>adenosylcob(III)alamin</name>
        <dbReference type="ChEBI" id="CHEBI:18408"/>
    </ligand>
</feature>
<feature type="binding site" evidence="1">
    <location>
        <begin position="148"/>
        <end position="149"/>
    </location>
    <ligand>
        <name>L-glutamate</name>
        <dbReference type="ChEBI" id="CHEBI:29985"/>
    </ligand>
</feature>
<feature type="binding site" evidence="1">
    <location>
        <position position="170"/>
    </location>
    <ligand>
        <name>L-glutamate</name>
        <dbReference type="ChEBI" id="CHEBI:29985"/>
    </ligand>
</feature>
<feature type="binding site" evidence="1">
    <location>
        <position position="176"/>
    </location>
    <ligand>
        <name>L-glutamate</name>
        <dbReference type="ChEBI" id="CHEBI:29985"/>
    </ligand>
</feature>
<feature type="binding site" evidence="1">
    <location>
        <position position="179"/>
    </location>
    <ligand>
        <name>adenosylcob(III)alamin</name>
        <dbReference type="ChEBI" id="CHEBI:18408"/>
    </ligand>
</feature>
<feature type="binding site" evidence="1">
    <location>
        <position position="180"/>
    </location>
    <ligand>
        <name>L-glutamate</name>
        <dbReference type="ChEBI" id="CHEBI:29985"/>
    </ligand>
</feature>
<feature type="binding site" evidence="1">
    <location>
        <position position="296"/>
    </location>
    <ligand>
        <name>adenosylcob(III)alamin</name>
        <dbReference type="ChEBI" id="CHEBI:18408"/>
    </ligand>
</feature>
<feature type="binding site" evidence="1">
    <location>
        <position position="325"/>
    </location>
    <ligand>
        <name>adenosylcob(III)alamin</name>
        <dbReference type="ChEBI" id="CHEBI:18408"/>
    </ligand>
</feature>
<feature type="binding site" evidence="1">
    <location>
        <position position="329"/>
    </location>
    <ligand>
        <name>adenosylcob(III)alamin</name>
        <dbReference type="ChEBI" id="CHEBI:18408"/>
    </ligand>
</feature>
<feature type="binding site" evidence="1">
    <location>
        <position position="333"/>
    </location>
    <ligand>
        <name>adenosylcob(III)alamin</name>
        <dbReference type="ChEBI" id="CHEBI:18408"/>
    </ligand>
</feature>
<comment type="function">
    <text evidence="1">Catalyzes the carbon skeleton rearrangement of L-glutamate to L-threo-3-methylaspartate ((2S,3S)-3-methylaspartate).</text>
</comment>
<comment type="catalytic activity">
    <reaction evidence="1">
        <text>(2S,3S)-3-methyl-L-aspartate = L-glutamate</text>
        <dbReference type="Rhea" id="RHEA:12857"/>
        <dbReference type="ChEBI" id="CHEBI:29985"/>
        <dbReference type="ChEBI" id="CHEBI:58724"/>
        <dbReference type="EC" id="5.4.99.1"/>
    </reaction>
</comment>
<comment type="cofactor">
    <cofactor evidence="1">
        <name>adenosylcob(III)alamin</name>
        <dbReference type="ChEBI" id="CHEBI:18408"/>
    </cofactor>
</comment>
<comment type="pathway">
    <text evidence="1">Amino-acid degradation; L-glutamate degradation via mesaconate pathway; acetate and pyruvate from L-glutamate: step 1/4.</text>
</comment>
<comment type="subunit">
    <text evidence="1">Heterotetramer composed of 2 epsilon subunits (GlmE) and 2 sigma subunits (GlmS). GlmE exists as a homodimer and GlmS as a monomer.</text>
</comment>
<comment type="similarity">
    <text evidence="1">Belongs to the methylaspartate mutase GlmE subunit family.</text>
</comment>
<accession>A1JSN7</accession>
<sequence length="481" mass="53092">MELRNKKISLDDFMSERFHVLKTWHTGKDVENFEDGVKYQQTIPESKNFARALFEADCNGITLSQPRAGVALIEEHIELLKTLQKDCDLLPTTIDAYTRLNRYEEAAVGIQKSIEAGTSKLNGLPVVNHGVKACRRITESLSKPLQIRHGTPDARLLAEIAMASGFTSYEGGGISYNIPYAKRVTLEKSIRDWQYCDRLIGVYEEHGIRINREPFGPLTGTLIPPFVSHAVAIIEGLLALEQGVKSVTVGYGQVGNIVQDIAAIQSLRELAHEYFRANGYENYELSTVFHQWMGGFPEDESRAFAVISWGAAVAGMAGATKVITKSPHEAYGIPTAEANGQGLRASNQMLNMVRDQKFPPCVEVDREVALIKREVRAVMDKVLELGQGDIAIGTVRAFEAGVLDVPFAPATCNSGKMMPIRDNHGAIRVFDPGSVPLPKDVLTLHHDFIAERAKEEGRIPSFQMIIDDINAVSHSKLIGRP</sequence>
<keyword id="KW-0846">Cobalamin</keyword>
<keyword id="KW-0170">Cobalt</keyword>
<keyword id="KW-0413">Isomerase</keyword>